<keyword id="KW-0312">Gluconeogenesis</keyword>
<keyword id="KW-0324">Glycolysis</keyword>
<keyword id="KW-0413">Isomerase</keyword>
<keyword id="KW-1185">Reference proteome</keyword>
<comment type="function">
    <text evidence="1">Catalyzes the interconversion of 2-phosphoglycerate and 3-phosphoglycerate.</text>
</comment>
<comment type="catalytic activity">
    <reaction evidence="1">
        <text>(2R)-2-phosphoglycerate = (2R)-3-phosphoglycerate</text>
        <dbReference type="Rhea" id="RHEA:15901"/>
        <dbReference type="ChEBI" id="CHEBI:58272"/>
        <dbReference type="ChEBI" id="CHEBI:58289"/>
        <dbReference type="EC" id="5.4.2.11"/>
    </reaction>
</comment>
<comment type="pathway">
    <text evidence="1">Carbohydrate degradation; glycolysis; pyruvate from D-glyceraldehyde 3-phosphate: step 3/5.</text>
</comment>
<comment type="subunit">
    <text evidence="1">Homodimer.</text>
</comment>
<comment type="similarity">
    <text evidence="1">Belongs to the phosphoglycerate mutase family. BPG-dependent PGAM subfamily.</text>
</comment>
<reference key="1">
    <citation type="journal article" date="2009" name="J. Bacteriol.">
        <title>Complete genome sequence of Erythrobacter litoralis HTCC2594.</title>
        <authorList>
            <person name="Oh H.M."/>
            <person name="Giovannoni S.J."/>
            <person name="Ferriera S."/>
            <person name="Johnson J."/>
            <person name="Cho J.C."/>
        </authorList>
    </citation>
    <scope>NUCLEOTIDE SEQUENCE [LARGE SCALE GENOMIC DNA]</scope>
    <source>
        <strain>HTCC2594</strain>
    </source>
</reference>
<proteinExistence type="inferred from homology"/>
<dbReference type="EC" id="5.4.2.11" evidence="1"/>
<dbReference type="EMBL" id="CP000157">
    <property type="protein sequence ID" value="ABC64809.1"/>
    <property type="molecule type" value="Genomic_DNA"/>
</dbReference>
<dbReference type="RefSeq" id="WP_011415631.1">
    <property type="nucleotide sequence ID" value="NC_007722.1"/>
</dbReference>
<dbReference type="SMR" id="Q2N682"/>
<dbReference type="STRING" id="314225.ELI_13585"/>
<dbReference type="KEGG" id="eli:ELI_13585"/>
<dbReference type="eggNOG" id="COG0588">
    <property type="taxonomic scope" value="Bacteria"/>
</dbReference>
<dbReference type="HOGENOM" id="CLU_033323_1_1_5"/>
<dbReference type="OrthoDB" id="9781415at2"/>
<dbReference type="UniPathway" id="UPA00109">
    <property type="reaction ID" value="UER00186"/>
</dbReference>
<dbReference type="Proteomes" id="UP000008808">
    <property type="component" value="Chromosome"/>
</dbReference>
<dbReference type="GO" id="GO:0004619">
    <property type="term" value="F:phosphoglycerate mutase activity"/>
    <property type="evidence" value="ECO:0007669"/>
    <property type="project" value="UniProtKB-EC"/>
</dbReference>
<dbReference type="GO" id="GO:0006094">
    <property type="term" value="P:gluconeogenesis"/>
    <property type="evidence" value="ECO:0007669"/>
    <property type="project" value="UniProtKB-UniRule"/>
</dbReference>
<dbReference type="GO" id="GO:0006096">
    <property type="term" value="P:glycolytic process"/>
    <property type="evidence" value="ECO:0007669"/>
    <property type="project" value="UniProtKB-UniRule"/>
</dbReference>
<dbReference type="CDD" id="cd07067">
    <property type="entry name" value="HP_PGM_like"/>
    <property type="match status" value="1"/>
</dbReference>
<dbReference type="FunFam" id="3.40.50.1240:FF:000003">
    <property type="entry name" value="2,3-bisphosphoglycerate-dependent phosphoglycerate mutase"/>
    <property type="match status" value="1"/>
</dbReference>
<dbReference type="Gene3D" id="3.40.50.1240">
    <property type="entry name" value="Phosphoglycerate mutase-like"/>
    <property type="match status" value="1"/>
</dbReference>
<dbReference type="HAMAP" id="MF_01039">
    <property type="entry name" value="PGAM_GpmA"/>
    <property type="match status" value="1"/>
</dbReference>
<dbReference type="InterPro" id="IPR013078">
    <property type="entry name" value="His_Pase_superF_clade-1"/>
</dbReference>
<dbReference type="InterPro" id="IPR029033">
    <property type="entry name" value="His_PPase_superfam"/>
</dbReference>
<dbReference type="InterPro" id="IPR001345">
    <property type="entry name" value="PG/BPGM_mutase_AS"/>
</dbReference>
<dbReference type="InterPro" id="IPR005952">
    <property type="entry name" value="Phosphogly_mut1"/>
</dbReference>
<dbReference type="NCBIfam" id="TIGR01258">
    <property type="entry name" value="pgm_1"/>
    <property type="match status" value="1"/>
</dbReference>
<dbReference type="NCBIfam" id="NF010713">
    <property type="entry name" value="PRK14115.1"/>
    <property type="match status" value="1"/>
</dbReference>
<dbReference type="PANTHER" id="PTHR11931">
    <property type="entry name" value="PHOSPHOGLYCERATE MUTASE"/>
    <property type="match status" value="1"/>
</dbReference>
<dbReference type="Pfam" id="PF00300">
    <property type="entry name" value="His_Phos_1"/>
    <property type="match status" value="1"/>
</dbReference>
<dbReference type="PIRSF" id="PIRSF000709">
    <property type="entry name" value="6PFK_2-Ptase"/>
    <property type="match status" value="1"/>
</dbReference>
<dbReference type="SMART" id="SM00855">
    <property type="entry name" value="PGAM"/>
    <property type="match status" value="1"/>
</dbReference>
<dbReference type="SUPFAM" id="SSF53254">
    <property type="entry name" value="Phosphoglycerate mutase-like"/>
    <property type="match status" value="1"/>
</dbReference>
<dbReference type="PROSITE" id="PS00175">
    <property type="entry name" value="PG_MUTASE"/>
    <property type="match status" value="1"/>
</dbReference>
<gene>
    <name evidence="1" type="primary">gpmA</name>
    <name type="ordered locus">ELI_13585</name>
</gene>
<feature type="chain" id="PRO_1000064060" description="2,3-bisphosphoglycerate-dependent phosphoglycerate mutase">
    <location>
        <begin position="1"/>
        <end position="228"/>
    </location>
</feature>
<feature type="active site" description="Tele-phosphohistidine intermediate" evidence="1">
    <location>
        <position position="9"/>
    </location>
</feature>
<feature type="active site" description="Proton donor/acceptor" evidence="1">
    <location>
        <position position="87"/>
    </location>
</feature>
<feature type="binding site" evidence="1">
    <location>
        <begin position="8"/>
        <end position="15"/>
    </location>
    <ligand>
        <name>substrate</name>
    </ligand>
</feature>
<feature type="binding site" evidence="1">
    <location>
        <begin position="21"/>
        <end position="22"/>
    </location>
    <ligand>
        <name>substrate</name>
    </ligand>
</feature>
<feature type="binding site" evidence="1">
    <location>
        <position position="60"/>
    </location>
    <ligand>
        <name>substrate</name>
    </ligand>
</feature>
<feature type="binding site" evidence="1">
    <location>
        <begin position="87"/>
        <end position="90"/>
    </location>
    <ligand>
        <name>substrate</name>
    </ligand>
</feature>
<feature type="binding site" evidence="1">
    <location>
        <position position="98"/>
    </location>
    <ligand>
        <name>substrate</name>
    </ligand>
</feature>
<feature type="binding site" evidence="1">
    <location>
        <begin position="114"/>
        <end position="115"/>
    </location>
    <ligand>
        <name>substrate</name>
    </ligand>
</feature>
<feature type="binding site" evidence="1">
    <location>
        <begin position="180"/>
        <end position="181"/>
    </location>
    <ligand>
        <name>substrate</name>
    </ligand>
</feature>
<feature type="site" description="Transition state stabilizer" evidence="1">
    <location>
        <position position="179"/>
    </location>
</feature>
<evidence type="ECO:0000255" key="1">
    <source>
        <dbReference type="HAMAP-Rule" id="MF_01039"/>
    </source>
</evidence>
<accession>Q2N682</accession>
<sequence>MPTLILVRHGQSQWNLENRFTGWWDVDLTEKGVEEAKAAGTLLKEKGVLPTVAFTSFQTRAIKTLHLALEEADRLWIPETKDWRLNERHYGGLTGLDKQEMRDKHGDEQVHIWRRSFDVPPPDMEPGHQYDPGADPRYDGIDVPTTESLKLTIERVLPYWESEILPVLASGETVIISAHGNSLRALVKHLSGISDEDITGLEIPTGQPIIYQFDDRMQPGERYYLKDS</sequence>
<protein>
    <recommendedName>
        <fullName evidence="1">2,3-bisphosphoglycerate-dependent phosphoglycerate mutase</fullName>
        <shortName evidence="1">BPG-dependent PGAM</shortName>
        <shortName evidence="1">PGAM</shortName>
        <shortName evidence="1">Phosphoglyceromutase</shortName>
        <shortName evidence="1">dPGM</shortName>
        <ecNumber evidence="1">5.4.2.11</ecNumber>
    </recommendedName>
</protein>
<name>GPMA_ERYLH</name>
<organism>
    <name type="scientific">Erythrobacter litoralis (strain HTCC2594)</name>
    <dbReference type="NCBI Taxonomy" id="314225"/>
    <lineage>
        <taxon>Bacteria</taxon>
        <taxon>Pseudomonadati</taxon>
        <taxon>Pseudomonadota</taxon>
        <taxon>Alphaproteobacteria</taxon>
        <taxon>Sphingomonadales</taxon>
        <taxon>Erythrobacteraceae</taxon>
        <taxon>Erythrobacter/Porphyrobacter group</taxon>
        <taxon>Erythrobacter</taxon>
    </lineage>
</organism>